<name>PSBB_BIGNA</name>
<dbReference type="EMBL" id="DQ851108">
    <property type="protein sequence ID" value="ABG91435.1"/>
    <property type="molecule type" value="Genomic_DNA"/>
</dbReference>
<dbReference type="RefSeq" id="YP_778603.1">
    <property type="nucleotide sequence ID" value="NC_008408.1"/>
</dbReference>
<dbReference type="SMR" id="Q06J24"/>
<dbReference type="GeneID" id="4353020"/>
<dbReference type="GO" id="GO:0009535">
    <property type="term" value="C:chloroplast thylakoid membrane"/>
    <property type="evidence" value="ECO:0007669"/>
    <property type="project" value="UniProtKB-SubCell"/>
</dbReference>
<dbReference type="GO" id="GO:0009523">
    <property type="term" value="C:photosystem II"/>
    <property type="evidence" value="ECO:0007669"/>
    <property type="project" value="UniProtKB-KW"/>
</dbReference>
<dbReference type="GO" id="GO:0016168">
    <property type="term" value="F:chlorophyll binding"/>
    <property type="evidence" value="ECO:0007669"/>
    <property type="project" value="UniProtKB-UniRule"/>
</dbReference>
<dbReference type="GO" id="GO:0045156">
    <property type="term" value="F:electron transporter, transferring electrons within the cyclic electron transport pathway of photosynthesis activity"/>
    <property type="evidence" value="ECO:0007669"/>
    <property type="project" value="InterPro"/>
</dbReference>
<dbReference type="GO" id="GO:0009772">
    <property type="term" value="P:photosynthetic electron transport in photosystem II"/>
    <property type="evidence" value="ECO:0007669"/>
    <property type="project" value="InterPro"/>
</dbReference>
<dbReference type="Gene3D" id="3.10.680.10">
    <property type="entry name" value="Photosystem II CP47 reaction center protein"/>
    <property type="match status" value="1"/>
</dbReference>
<dbReference type="HAMAP" id="MF_01495">
    <property type="entry name" value="PSII_PsbB_CP47"/>
    <property type="match status" value="1"/>
</dbReference>
<dbReference type="InterPro" id="IPR000932">
    <property type="entry name" value="PS_antenna-like"/>
</dbReference>
<dbReference type="InterPro" id="IPR036001">
    <property type="entry name" value="PS_II_antenna-like_sf"/>
</dbReference>
<dbReference type="InterPro" id="IPR017486">
    <property type="entry name" value="PSII_PsbB"/>
</dbReference>
<dbReference type="NCBIfam" id="TIGR03039">
    <property type="entry name" value="PS_II_CP47"/>
    <property type="match status" value="1"/>
</dbReference>
<dbReference type="Pfam" id="PF00421">
    <property type="entry name" value="PSII"/>
    <property type="match status" value="1"/>
</dbReference>
<dbReference type="SUPFAM" id="SSF161077">
    <property type="entry name" value="Photosystem II antenna protein-like"/>
    <property type="match status" value="1"/>
</dbReference>
<gene>
    <name evidence="1" type="primary">psbB</name>
</gene>
<reference key="1">
    <citation type="journal article" date="2007" name="Mol. Biol. Evol.">
        <title>The complete chloroplast genome of the chlorarachniophyte Bigelowiella natans: evidence for independent origins of chlorarachniophyte and euglenid secondary endosymbionts.</title>
        <authorList>
            <person name="Rogers M.B."/>
            <person name="Gilson P.R."/>
            <person name="Su V."/>
            <person name="McFadden G.I."/>
            <person name="Keeling P.J."/>
        </authorList>
    </citation>
    <scope>NUCLEOTIDE SEQUENCE [LARGE SCALE GENOMIC DNA]</scope>
</reference>
<feature type="chain" id="PRO_0000295863" description="Photosystem II CP47 reaction center protein">
    <location>
        <begin position="1"/>
        <end position="508"/>
    </location>
</feature>
<feature type="transmembrane region" description="Helical" evidence="1">
    <location>
        <begin position="21"/>
        <end position="36"/>
    </location>
</feature>
<feature type="transmembrane region" description="Helical" evidence="1">
    <location>
        <begin position="101"/>
        <end position="115"/>
    </location>
</feature>
<feature type="transmembrane region" description="Helical" evidence="1">
    <location>
        <begin position="140"/>
        <end position="156"/>
    </location>
</feature>
<feature type="transmembrane region" description="Helical" evidence="1">
    <location>
        <begin position="203"/>
        <end position="218"/>
    </location>
</feature>
<feature type="transmembrane region" description="Helical" evidence="1">
    <location>
        <begin position="237"/>
        <end position="252"/>
    </location>
</feature>
<feature type="transmembrane region" description="Helical" evidence="1">
    <location>
        <begin position="457"/>
        <end position="472"/>
    </location>
</feature>
<organism>
    <name type="scientific">Bigelowiella natans</name>
    <name type="common">Pedinomonas minutissima</name>
    <name type="synonym">Chlorarachnion sp. (strain CCMP621)</name>
    <dbReference type="NCBI Taxonomy" id="227086"/>
    <lineage>
        <taxon>Eukaryota</taxon>
        <taxon>Sar</taxon>
        <taxon>Rhizaria</taxon>
        <taxon>Cercozoa</taxon>
        <taxon>Chlorarachniophyceae</taxon>
        <taxon>Bigelowiella</taxon>
    </lineage>
</organism>
<evidence type="ECO:0000255" key="1">
    <source>
        <dbReference type="HAMAP-Rule" id="MF_01495"/>
    </source>
</evidence>
<evidence type="ECO:0000305" key="2"/>
<proteinExistence type="inferred from homology"/>
<comment type="function">
    <text evidence="1">One of the components of the core complex of photosystem II (PSII). It binds chlorophyll and helps catalyze the primary light-induced photochemical processes of PSII. PSII is a light-driven water:plastoquinone oxidoreductase, using light energy to abstract electrons from H(2)O, generating O(2) and a proton gradient subsequently used for ATP formation.</text>
</comment>
<comment type="cofactor">
    <text evidence="1">Binds multiple chlorophylls. PSII binds additional chlorophylls, carotenoids and specific lipids.</text>
</comment>
<comment type="subunit">
    <text evidence="2">PSII is composed of 1 copy each of membrane proteins PsbA, PsbB, PsbC, PsbD, PsbE, PsbF, PsbH, PsbI, PsbJ, PsbK, PsbL, PsbM, PsbT, PsbY, PsbZ, Psb30/Ycf12, at least 3 peripheral proteins of the oxygen-evolving complex and a large number of cofactors. It forms dimeric complexes.</text>
</comment>
<comment type="subcellular location">
    <subcellularLocation>
        <location evidence="1">Plastid</location>
        <location evidence="1">Chloroplast thylakoid membrane</location>
        <topology evidence="1">Multi-pass membrane protein</topology>
    </subcellularLocation>
</comment>
<comment type="similarity">
    <text evidence="1">Belongs to the PsbB/PsbC family. PsbB subfamily.</text>
</comment>
<accession>Q06J24</accession>
<geneLocation type="chloroplast"/>
<keyword id="KW-0148">Chlorophyll</keyword>
<keyword id="KW-0150">Chloroplast</keyword>
<keyword id="KW-0157">Chromophore</keyword>
<keyword id="KW-0472">Membrane</keyword>
<keyword id="KW-0602">Photosynthesis</keyword>
<keyword id="KW-0604">Photosystem II</keyword>
<keyword id="KW-0934">Plastid</keyword>
<keyword id="KW-0793">Thylakoid</keyword>
<keyword id="KW-0812">Transmembrane</keyword>
<keyword id="KW-1133">Transmembrane helix</keyword>
<sequence length="508" mass="56637">MGLPWYRVHTVVLNDPGRLIAVHLMHTSLVSGWAGSMAFYELALFDPSDPILNPMWRQGMFVLPFMTRIGITQSWSNWSISGDSVVNPGIWSYEGVAASHIILSGLLFMAAIWHWVYWDLELFIDKRTMFPVLDLPKIFGIHLLLSGILCFGFGAFHVTGLFGPGIWVSDPYGLTGKVQQISPAWGADGFDPFNPGGVASHHIAAGILGIIAGLFHLSVRPSQRLYDALKMGNIETVLSSSIAAVFWAAFVVAGTMWYGSAATPIELFGPTRYQWDQGYFQQEIERRVQANIDNGNSIDKAWSLIPEKLAFYDYIGNNPAKGGLFRVGAMNSGDGIAVGWLGHPIFKDKLGNELFVRRMPTFFETFPVLLVDENGIVKADIPFRRAESKYSIEQVGVSATFYGGELNNATFTDPATVKKYARRAQLGEIFEFDRTTLKSDGVFRSSPRAWFTFGHLIFALLFFFGHIWHGARTLFRQVFAGIDPDLDEQIEFGTFLKLGDTSTRRQSV</sequence>
<protein>
    <recommendedName>
        <fullName evidence="1">Photosystem II CP47 reaction center protein</fullName>
    </recommendedName>
    <alternativeName>
        <fullName evidence="1">PSII 47 kDa protein</fullName>
    </alternativeName>
    <alternativeName>
        <fullName evidence="1">Protein CP-47</fullName>
    </alternativeName>
</protein>